<organism>
    <name type="scientific">Caenorhabditis elegans</name>
    <dbReference type="NCBI Taxonomy" id="6239"/>
    <lineage>
        <taxon>Eukaryota</taxon>
        <taxon>Metazoa</taxon>
        <taxon>Ecdysozoa</taxon>
        <taxon>Nematoda</taxon>
        <taxon>Chromadorea</taxon>
        <taxon>Rhabditida</taxon>
        <taxon>Rhabditina</taxon>
        <taxon>Rhabditomorpha</taxon>
        <taxon>Rhabditoidea</taxon>
        <taxon>Rhabditidae</taxon>
        <taxon>Peloderinae</taxon>
        <taxon>Caenorhabditis</taxon>
    </lineage>
</organism>
<accession>G5EFD4</accession>
<dbReference type="EMBL" id="AF497513">
    <property type="protein sequence ID" value="AAM33380.1"/>
    <property type="molecule type" value="mRNA"/>
</dbReference>
<dbReference type="EMBL" id="AF497514">
    <property type="protein sequence ID" value="AAM33381.1"/>
    <property type="molecule type" value="Genomic_DNA"/>
</dbReference>
<dbReference type="EMBL" id="BX284603">
    <property type="protein sequence ID" value="CAB04947.3"/>
    <property type="molecule type" value="Genomic_DNA"/>
</dbReference>
<dbReference type="PIR" id="T26313">
    <property type="entry name" value="T26313"/>
</dbReference>
<dbReference type="RefSeq" id="NP_001022812.1">
    <property type="nucleotide sequence ID" value="NM_001027641.4"/>
</dbReference>
<dbReference type="SMR" id="G5EFD4"/>
<dbReference type="FunCoup" id="G5EFD4">
    <property type="interactions" value="1918"/>
</dbReference>
<dbReference type="STRING" id="6239.W09D6.6.1"/>
<dbReference type="PaxDb" id="6239-W09D6.6"/>
<dbReference type="PeptideAtlas" id="G5EFD4"/>
<dbReference type="EnsemblMetazoa" id="W09D6.6.1">
    <property type="protein sequence ID" value="W09D6.6.1"/>
    <property type="gene ID" value="WBGene00001815"/>
</dbReference>
<dbReference type="GeneID" id="176540"/>
<dbReference type="KEGG" id="cel:CELE_W09D6.6"/>
<dbReference type="AGR" id="WB:WBGene00001815"/>
<dbReference type="CTD" id="41925"/>
<dbReference type="WormBase" id="W09D6.6">
    <property type="protein sequence ID" value="CE31731"/>
    <property type="gene ID" value="WBGene00001815"/>
    <property type="gene designation" value="hmt-1"/>
</dbReference>
<dbReference type="eggNOG" id="KOG0056">
    <property type="taxonomic scope" value="Eukaryota"/>
</dbReference>
<dbReference type="GeneTree" id="ENSGT00940000156160"/>
<dbReference type="HOGENOM" id="CLU_000604_84_1_1"/>
<dbReference type="InParanoid" id="G5EFD4"/>
<dbReference type="OMA" id="YYGAEHY"/>
<dbReference type="OrthoDB" id="6500128at2759"/>
<dbReference type="PhylomeDB" id="G5EFD4"/>
<dbReference type="BRENDA" id="7.2.2.2">
    <property type="organism ID" value="1045"/>
</dbReference>
<dbReference type="Reactome" id="R-CEL-1369007">
    <property type="pathway name" value="Mitochondrial ABC transporters"/>
</dbReference>
<dbReference type="PRO" id="PR:G5EFD4"/>
<dbReference type="Proteomes" id="UP000001940">
    <property type="component" value="Chromosome III"/>
</dbReference>
<dbReference type="Bgee" id="WBGene00001815">
    <property type="expression patterns" value="Expressed in germ line (C elegans) and 4 other cell types or tissues"/>
</dbReference>
<dbReference type="GO" id="GO:0005769">
    <property type="term" value="C:early endosome"/>
    <property type="evidence" value="ECO:0000314"/>
    <property type="project" value="UniProtKB"/>
</dbReference>
<dbReference type="GO" id="GO:0005770">
    <property type="term" value="C:late endosome"/>
    <property type="evidence" value="ECO:0000314"/>
    <property type="project" value="UniProtKB"/>
</dbReference>
<dbReference type="GO" id="GO:0016020">
    <property type="term" value="C:membrane"/>
    <property type="evidence" value="ECO:0000314"/>
    <property type="project" value="WormBase"/>
</dbReference>
<dbReference type="GO" id="GO:0055037">
    <property type="term" value="C:recycling endosome"/>
    <property type="evidence" value="ECO:0000314"/>
    <property type="project" value="UniProtKB"/>
</dbReference>
<dbReference type="GO" id="GO:0005774">
    <property type="term" value="C:vacuolar membrane"/>
    <property type="evidence" value="ECO:0000314"/>
    <property type="project" value="WormBase"/>
</dbReference>
<dbReference type="GO" id="GO:0015439">
    <property type="term" value="F:ABC-type heme transporter activity"/>
    <property type="evidence" value="ECO:0000318"/>
    <property type="project" value="GO_Central"/>
</dbReference>
<dbReference type="GO" id="GO:0005524">
    <property type="term" value="F:ATP binding"/>
    <property type="evidence" value="ECO:0007669"/>
    <property type="project" value="UniProtKB-KW"/>
</dbReference>
<dbReference type="GO" id="GO:0016887">
    <property type="term" value="F:ATP hydrolysis activity"/>
    <property type="evidence" value="ECO:0007669"/>
    <property type="project" value="InterPro"/>
</dbReference>
<dbReference type="GO" id="GO:0015086">
    <property type="term" value="F:cadmium ion transmembrane transporter activity"/>
    <property type="evidence" value="ECO:0000314"/>
    <property type="project" value="WormBase"/>
</dbReference>
<dbReference type="GO" id="GO:0020037">
    <property type="term" value="F:heme binding"/>
    <property type="evidence" value="ECO:0000318"/>
    <property type="project" value="GO_Central"/>
</dbReference>
<dbReference type="GO" id="GO:0070574">
    <property type="term" value="P:cadmium ion transmembrane transport"/>
    <property type="evidence" value="ECO:0000314"/>
    <property type="project" value="WormBase"/>
</dbReference>
<dbReference type="GO" id="GO:0098849">
    <property type="term" value="P:cellular detoxification of cadmium ion"/>
    <property type="evidence" value="ECO:0000314"/>
    <property type="project" value="UniProtKB"/>
</dbReference>
<dbReference type="GO" id="GO:0071585">
    <property type="term" value="P:detoxification of cadmium ion"/>
    <property type="evidence" value="ECO:0000315"/>
    <property type="project" value="WormBase"/>
</dbReference>
<dbReference type="GO" id="GO:0010273">
    <property type="term" value="P:detoxification of copper ion"/>
    <property type="evidence" value="ECO:0000315"/>
    <property type="project" value="WormBase"/>
</dbReference>
<dbReference type="GO" id="GO:0015886">
    <property type="term" value="P:heme transport"/>
    <property type="evidence" value="ECO:0000318"/>
    <property type="project" value="GO_Central"/>
</dbReference>
<dbReference type="GO" id="GO:0046686">
    <property type="term" value="P:response to cadmium ion"/>
    <property type="evidence" value="ECO:0000315"/>
    <property type="project" value="WormBase"/>
</dbReference>
<dbReference type="GO" id="GO:0055085">
    <property type="term" value="P:transmembrane transport"/>
    <property type="evidence" value="ECO:0000318"/>
    <property type="project" value="GO_Central"/>
</dbReference>
<dbReference type="CDD" id="cd18581">
    <property type="entry name" value="ABC_6TM_ABCB6"/>
    <property type="match status" value="1"/>
</dbReference>
<dbReference type="CDD" id="cd03253">
    <property type="entry name" value="ABCC_ATM1_transporter"/>
    <property type="match status" value="1"/>
</dbReference>
<dbReference type="FunFam" id="3.40.50.300:FF:000186">
    <property type="entry name" value="ATP-binding cassette sub-family B member 7, mitochondrial"/>
    <property type="match status" value="1"/>
</dbReference>
<dbReference type="FunFam" id="1.20.1560.10:FF:000314">
    <property type="entry name" value="Heavy metal tolerance factor 1"/>
    <property type="match status" value="1"/>
</dbReference>
<dbReference type="Gene3D" id="1.20.1560.10">
    <property type="entry name" value="ABC transporter type 1, transmembrane domain"/>
    <property type="match status" value="1"/>
</dbReference>
<dbReference type="Gene3D" id="3.40.50.300">
    <property type="entry name" value="P-loop containing nucleotide triphosphate hydrolases"/>
    <property type="match status" value="1"/>
</dbReference>
<dbReference type="InterPro" id="IPR003593">
    <property type="entry name" value="AAA+_ATPase"/>
</dbReference>
<dbReference type="InterPro" id="IPR011527">
    <property type="entry name" value="ABC1_TM_dom"/>
</dbReference>
<dbReference type="InterPro" id="IPR036640">
    <property type="entry name" value="ABC1_TM_sf"/>
</dbReference>
<dbReference type="InterPro" id="IPR003439">
    <property type="entry name" value="ABC_transporter-like_ATP-bd"/>
</dbReference>
<dbReference type="InterPro" id="IPR017871">
    <property type="entry name" value="ABC_transporter-like_CS"/>
</dbReference>
<dbReference type="InterPro" id="IPR027417">
    <property type="entry name" value="P-loop_NTPase"/>
</dbReference>
<dbReference type="InterPro" id="IPR039421">
    <property type="entry name" value="Type_1_exporter"/>
</dbReference>
<dbReference type="PANTHER" id="PTHR24221">
    <property type="entry name" value="ATP-BINDING CASSETTE SUB-FAMILY B"/>
    <property type="match status" value="1"/>
</dbReference>
<dbReference type="PANTHER" id="PTHR24221:SF654">
    <property type="entry name" value="ATP-BINDING CASSETTE SUB-FAMILY B MEMBER 6"/>
    <property type="match status" value="1"/>
</dbReference>
<dbReference type="Pfam" id="PF00664">
    <property type="entry name" value="ABC_membrane"/>
    <property type="match status" value="1"/>
</dbReference>
<dbReference type="Pfam" id="PF00005">
    <property type="entry name" value="ABC_tran"/>
    <property type="match status" value="1"/>
</dbReference>
<dbReference type="SMART" id="SM00382">
    <property type="entry name" value="AAA"/>
    <property type="match status" value="1"/>
</dbReference>
<dbReference type="SUPFAM" id="SSF90123">
    <property type="entry name" value="ABC transporter transmembrane region"/>
    <property type="match status" value="1"/>
</dbReference>
<dbReference type="SUPFAM" id="SSF52540">
    <property type="entry name" value="P-loop containing nucleoside triphosphate hydrolases"/>
    <property type="match status" value="1"/>
</dbReference>
<dbReference type="PROSITE" id="PS50929">
    <property type="entry name" value="ABC_TM1F"/>
    <property type="match status" value="1"/>
</dbReference>
<dbReference type="PROSITE" id="PS00211">
    <property type="entry name" value="ABC_TRANSPORTER_1"/>
    <property type="match status" value="1"/>
</dbReference>
<dbReference type="PROSITE" id="PS50893">
    <property type="entry name" value="ABC_TRANSPORTER_2"/>
    <property type="match status" value="1"/>
</dbReference>
<evidence type="ECO:0000255" key="1"/>
<evidence type="ECO:0000255" key="2">
    <source>
        <dbReference type="PROSITE-ProRule" id="PRU00434"/>
    </source>
</evidence>
<evidence type="ECO:0000255" key="3">
    <source>
        <dbReference type="PROSITE-ProRule" id="PRU00441"/>
    </source>
</evidence>
<evidence type="ECO:0000269" key="4">
    <source>
    </source>
</evidence>
<evidence type="ECO:0000269" key="5">
    <source>
    </source>
</evidence>
<evidence type="ECO:0000303" key="6">
    <source>
    </source>
</evidence>
<evidence type="ECO:0000305" key="7"/>
<evidence type="ECO:0000312" key="8">
    <source>
        <dbReference type="WormBase" id="W09D6.6"/>
    </source>
</evidence>
<name>HMT1_CAEEL</name>
<reference key="1">
    <citation type="journal article" date="2005" name="J. Biol. Chem.">
        <title>CeHMT-1, a putative phytochelatin transporter, is required for cadmium tolerance in Caenorhabditis elegans.</title>
        <authorList>
            <person name="Vatamaniuk O.K."/>
            <person name="Bucher E.A."/>
            <person name="Sundaram M.V."/>
            <person name="Rea P.A."/>
        </authorList>
    </citation>
    <scope>NUCLEOTIDE SEQUENCE [GENOMIC DNA / MRNA]</scope>
    <scope>DISRUPTION PHENOTYPE</scope>
    <scope>SUBCELLULAR LOCATION</scope>
    <scope>FUNCTION</scope>
    <scope>TISSUE SPECIFICITY</scope>
</reference>
<reference key="2">
    <citation type="journal article" date="1998" name="Science">
        <title>Genome sequence of the nematode C. elegans: a platform for investigating biology.</title>
        <authorList>
            <consortium name="The C. elegans sequencing consortium"/>
        </authorList>
    </citation>
    <scope>NUCLEOTIDE SEQUENCE [LARGE SCALE GENOMIC DNA]</scope>
    <source>
        <strain>Bristol N2</strain>
    </source>
</reference>
<reference key="3">
    <citation type="journal article" date="2019" name="Cell. Mol. Life Sci.">
        <title>The human ABCB6 protein is the functional homologue of HMT-1 proteins mediating cadmium detoxification.</title>
        <authorList>
            <person name="Rakvacs Z."/>
            <person name="Kucsma N."/>
            <person name="Gera M."/>
            <person name="Igriczi B."/>
            <person name="Kiss K."/>
            <person name="Barna J."/>
            <person name="Kovacs D."/>
            <person name="Vellai T."/>
            <person name="Bencs L."/>
            <person name="Reisecker J.M."/>
            <person name="Szoboszlai N."/>
            <person name="Szakacs G."/>
        </authorList>
    </citation>
    <scope>SUBCELLULAR LOCATION</scope>
    <scope>DISRUPTION PHENOTYPE</scope>
    <scope>FUNCTION</scope>
</reference>
<protein>
    <recommendedName>
        <fullName evidence="7">Heavy metal tolerance factor 1</fullName>
    </recommendedName>
</protein>
<sequence>MGFSPFLDECRAEGLWPIGPSCNKIISFGVYTFFIVVNFIVLCIPNSNSANNNYRRMTDDDASSTSKLTISKILSICTIFAVICQSIFYFCFTFYFHPYTHLLLAFCVSKLFFWILSLCSFSKWRNQPSTPISLAFAFSAALLIHCIPLTDWKKYFEPTSKNRGDLTFYIIELALVTVVFFFTIVTGLFNFSGCSSRESAWNNLSKKVVTVAPYIWPTKSISLQLRVVFCLFLLIIGRLINVSLPILSKWIVDELATPDTFQYSLLFLATFLKFLQGNGAMGGFLNTVRTYLWIPIQQYTTRELEVELFKHLHSLSLRWHLSRKTGQVLRVMDRGTSSVNNILNYILFNVVPTIADIVIAVIFFFSAFNAYFGLIVFGTMALYLTVTISITEWRTQYIREANEKDNATSAIATDSLINYETVKYYGNEEFEVNRFKNAIESYQVTEWKTQASLAFLNCLQNAIIGIGMIGGSVFVVYMIVHEKTLTVGDYVLFTTYLLQLYTPLNFFGTIYRVIQKAFVDMENMFDLMNDEVEVKDLPHALPYTDPRGTISVKNLTFEYNTGLPVIKNISFEIGNGQTVALVGSSGSGKSTLIRLLFRLFESTEGSIEFDGIDVRNYTMHSLRQQIGIVPQDTVLFNDTIMYNIRFGRPDASDEEVIEAAKAAMIHEKITSLPEGYATMVGERGLKLSGGEKQRVAIARTILKKPQFIFLDEATSALDTPTERAIQKCLEKLCKSRTGVVVAHRLSTVVNADLILVLDKGIILERGNHKELLAQQGTYASMWEAQIAEQRAKSIELGEELP</sequence>
<keyword id="KW-0067">ATP-binding</keyword>
<keyword id="KW-0967">Endosome</keyword>
<keyword id="KW-0472">Membrane</keyword>
<keyword id="KW-0547">Nucleotide-binding</keyword>
<keyword id="KW-1185">Reference proteome</keyword>
<keyword id="KW-0812">Transmembrane</keyword>
<keyword id="KW-1133">Transmembrane helix</keyword>
<keyword id="KW-0813">Transport</keyword>
<keyword id="KW-0926">Vacuole</keyword>
<comment type="function">
    <text evidence="4 5">May play a pivotal role in the detoxification of heavy metals such as cadmium but do not depend exclusively on phytochelatins (PC) synthesis.</text>
</comment>
<comment type="subcellular location">
    <subcellularLocation>
        <location evidence="4">Vacuole membrane</location>
        <topology evidence="1">Multi-pass membrane protein</topology>
    </subcellularLocation>
    <subcellularLocation>
        <location evidence="5">Early endosome</location>
    </subcellularLocation>
    <subcellularLocation>
        <location evidence="5">Late endosome</location>
    </subcellularLocation>
    <subcellularLocation>
        <location evidence="5">Recycling endosome</location>
    </subcellularLocation>
</comment>
<comment type="tissue specificity">
    <text evidence="4">Expressed in coelomocytes, as well as in head and tail neurons, and in the intestinal cells.</text>
</comment>
<comment type="disruption phenotype">
    <text evidence="4 5">RNAi-mediated knockdown causes hypersensitivity to Cd(2+) and exhibit Cd(2+)-elicited changes in cellular morphology. Even at the lowest Cd(2+) concentrations they arrest in the early larval stages and eventually die. The intestinal epithelial cells of hmt-1 RNAi worms upon exposure to toxic levels of Cd(2+) elaborate punctate refractive inclusions within the vicinity of the nucleus.</text>
</comment>
<comment type="similarity">
    <text evidence="7">Belongs to the ABC transporter superfamily. ABCB family. Heavy Metal importer (TC 3.A.1.210) subfamily.</text>
</comment>
<feature type="chain" id="PRO_0000452719" description="Heavy metal tolerance factor 1">
    <location>
        <begin position="1"/>
        <end position="801"/>
    </location>
</feature>
<feature type="topological domain" description="Lumenal" evidence="7">
    <location>
        <begin position="1"/>
        <end position="24"/>
    </location>
</feature>
<feature type="transmembrane region" description="Helical" evidence="1">
    <location>
        <begin position="25"/>
        <end position="45"/>
    </location>
</feature>
<feature type="topological domain" description="Cytoplasmic" evidence="7">
    <location>
        <begin position="46"/>
        <end position="75"/>
    </location>
</feature>
<feature type="transmembrane region" description="Helical" evidence="1">
    <location>
        <begin position="76"/>
        <end position="96"/>
    </location>
</feature>
<feature type="topological domain" description="Lumenal" evidence="7">
    <location>
        <begin position="97"/>
        <end position="101"/>
    </location>
</feature>
<feature type="transmembrane region" description="Helical" evidence="1">
    <location>
        <begin position="102"/>
        <end position="122"/>
    </location>
</feature>
<feature type="topological domain" description="Cytoplasmic" evidence="7">
    <location>
        <begin position="123"/>
        <end position="129"/>
    </location>
</feature>
<feature type="transmembrane region" description="Helical" evidence="1">
    <location>
        <begin position="130"/>
        <end position="150"/>
    </location>
</feature>
<feature type="topological domain" description="Lumenal" evidence="7">
    <location>
        <begin position="151"/>
        <end position="167"/>
    </location>
</feature>
<feature type="transmembrane region" description="Helical" evidence="1">
    <location>
        <begin position="168"/>
        <end position="188"/>
    </location>
</feature>
<feature type="topological domain" description="Cytoplasmic" evidence="7">
    <location>
        <begin position="189"/>
        <end position="226"/>
    </location>
</feature>
<feature type="transmembrane region" description="Helical" evidence="1 3">
    <location>
        <begin position="227"/>
        <end position="247"/>
    </location>
</feature>
<feature type="topological domain" description="Lumenal" evidence="7">
    <location>
        <begin position="248"/>
        <end position="264"/>
    </location>
</feature>
<feature type="transmembrane region" description="Helical" evidence="1 3">
    <location>
        <begin position="265"/>
        <end position="285"/>
    </location>
</feature>
<feature type="topological domain" description="Cytoplasmic" evidence="7">
    <location>
        <begin position="286"/>
        <end position="341"/>
    </location>
</feature>
<feature type="transmembrane region" description="Helical" evidence="1 3">
    <location>
        <begin position="342"/>
        <end position="364"/>
    </location>
</feature>
<feature type="topological domain" description="Lumenal" evidence="7">
    <location>
        <begin position="365"/>
        <end position="371"/>
    </location>
</feature>
<feature type="transmembrane region" description="Helical" evidence="1 3">
    <location>
        <begin position="372"/>
        <end position="390"/>
    </location>
</feature>
<feature type="topological domain" description="Cytoplasmic" evidence="7">
    <location>
        <begin position="391"/>
        <end position="461"/>
    </location>
</feature>
<feature type="transmembrane region" description="Helical" evidence="1 3">
    <location>
        <begin position="462"/>
        <end position="482"/>
    </location>
</feature>
<feature type="topological domain" description="Lumenal" evidence="7">
    <location>
        <begin position="483"/>
        <end position="489"/>
    </location>
</feature>
<feature type="transmembrane region" description="Helical" evidence="1 3">
    <location>
        <begin position="490"/>
        <end position="510"/>
    </location>
</feature>
<feature type="topological domain" description="Cytoplasmic" evidence="7">
    <location>
        <begin position="511"/>
        <end position="801"/>
    </location>
</feature>
<feature type="domain" description="ABC transmembrane type-1" evidence="3">
    <location>
        <begin position="227"/>
        <end position="516"/>
    </location>
</feature>
<feature type="domain" description="ABC transporter" evidence="2">
    <location>
        <begin position="550"/>
        <end position="784"/>
    </location>
</feature>
<feature type="binding site" evidence="2">
    <location>
        <begin position="583"/>
        <end position="590"/>
    </location>
    <ligand>
        <name>ATP</name>
        <dbReference type="ChEBI" id="CHEBI:30616"/>
    </ligand>
</feature>
<proteinExistence type="evidence at transcript level"/>
<gene>
    <name evidence="6 8" type="primary">hmt-1</name>
    <name evidence="8" type="ORF">W09D6.6</name>
</gene>